<organism>
    <name type="scientific">Mesorhizobium japonicum (strain LMG 29417 / CECT 9101 / MAFF 303099)</name>
    <name type="common">Mesorhizobium loti (strain MAFF 303099)</name>
    <dbReference type="NCBI Taxonomy" id="266835"/>
    <lineage>
        <taxon>Bacteria</taxon>
        <taxon>Pseudomonadati</taxon>
        <taxon>Pseudomonadota</taxon>
        <taxon>Alphaproteobacteria</taxon>
        <taxon>Hyphomicrobiales</taxon>
        <taxon>Phyllobacteriaceae</taxon>
        <taxon>Mesorhizobium</taxon>
    </lineage>
</organism>
<accession>Q98LQ9</accession>
<name>YIDD_RHILO</name>
<keyword id="KW-0997">Cell inner membrane</keyword>
<keyword id="KW-1003">Cell membrane</keyword>
<keyword id="KW-0472">Membrane</keyword>
<proteinExistence type="inferred from homology"/>
<comment type="function">
    <text evidence="1">Could be involved in insertion of integral membrane proteins into the membrane.</text>
</comment>
<comment type="subcellular location">
    <subcellularLocation>
        <location evidence="1">Cell inner membrane</location>
        <topology evidence="1">Peripheral membrane protein</topology>
        <orientation evidence="1">Cytoplasmic side</orientation>
    </subcellularLocation>
</comment>
<comment type="similarity">
    <text evidence="1">Belongs to the UPF0161 family.</text>
</comment>
<comment type="sequence caution" evidence="3">
    <conflict type="erroneous initiation">
        <sequence resource="EMBL-CDS" id="BAB48404"/>
    </conflict>
</comment>
<gene>
    <name type="ordered locus">mll0918</name>
</gene>
<sequence>MHDPHGHAHTVRPPGRGRNWPGPWRKTPGRLLGTSFVRLYQLTLSGFVGNSCRHLPTCSEYAHEAIARHGLWAGGWMGFFRVLRCGPFGTHGIDLVPEVLADRYVWFMPWRYWRIGRKRAETRA</sequence>
<dbReference type="EMBL" id="BA000012">
    <property type="protein sequence ID" value="BAB48404.1"/>
    <property type="status" value="ALT_INIT"/>
    <property type="molecule type" value="Genomic_DNA"/>
</dbReference>
<dbReference type="KEGG" id="mlo:mll0918"/>
<dbReference type="eggNOG" id="COG0759">
    <property type="taxonomic scope" value="Bacteria"/>
</dbReference>
<dbReference type="HOGENOM" id="CLU_144811_0_0_5"/>
<dbReference type="Proteomes" id="UP000000552">
    <property type="component" value="Chromosome"/>
</dbReference>
<dbReference type="GO" id="GO:0005886">
    <property type="term" value="C:plasma membrane"/>
    <property type="evidence" value="ECO:0007669"/>
    <property type="project" value="UniProtKB-SubCell"/>
</dbReference>
<dbReference type="HAMAP" id="MF_00386">
    <property type="entry name" value="UPF0161_YidD"/>
    <property type="match status" value="1"/>
</dbReference>
<dbReference type="InterPro" id="IPR002696">
    <property type="entry name" value="Membr_insert_effic_factor_YidD"/>
</dbReference>
<dbReference type="NCBIfam" id="TIGR00278">
    <property type="entry name" value="membrane protein insertion efficiency factor YidD"/>
    <property type="match status" value="1"/>
</dbReference>
<dbReference type="PANTHER" id="PTHR33383">
    <property type="entry name" value="MEMBRANE PROTEIN INSERTION EFFICIENCY FACTOR-RELATED"/>
    <property type="match status" value="1"/>
</dbReference>
<dbReference type="PANTHER" id="PTHR33383:SF1">
    <property type="entry name" value="MEMBRANE PROTEIN INSERTION EFFICIENCY FACTOR-RELATED"/>
    <property type="match status" value="1"/>
</dbReference>
<dbReference type="Pfam" id="PF01809">
    <property type="entry name" value="YidD"/>
    <property type="match status" value="1"/>
</dbReference>
<dbReference type="SMART" id="SM01234">
    <property type="entry name" value="Haemolytic"/>
    <property type="match status" value="1"/>
</dbReference>
<evidence type="ECO:0000255" key="1">
    <source>
        <dbReference type="HAMAP-Rule" id="MF_00386"/>
    </source>
</evidence>
<evidence type="ECO:0000256" key="2">
    <source>
        <dbReference type="SAM" id="MobiDB-lite"/>
    </source>
</evidence>
<evidence type="ECO:0000305" key="3"/>
<feature type="chain" id="PRO_0000171859" description="Putative membrane protein insertion efficiency factor">
    <location>
        <begin position="1"/>
        <end position="124"/>
    </location>
</feature>
<feature type="region of interest" description="Disordered" evidence="2">
    <location>
        <begin position="1"/>
        <end position="24"/>
    </location>
</feature>
<feature type="compositionally biased region" description="Low complexity" evidence="2">
    <location>
        <begin position="12"/>
        <end position="24"/>
    </location>
</feature>
<reference key="1">
    <citation type="journal article" date="2000" name="DNA Res.">
        <title>Complete genome structure of the nitrogen-fixing symbiotic bacterium Mesorhizobium loti.</title>
        <authorList>
            <person name="Kaneko T."/>
            <person name="Nakamura Y."/>
            <person name="Sato S."/>
            <person name="Asamizu E."/>
            <person name="Kato T."/>
            <person name="Sasamoto S."/>
            <person name="Watanabe A."/>
            <person name="Idesawa K."/>
            <person name="Ishikawa A."/>
            <person name="Kawashima K."/>
            <person name="Kimura T."/>
            <person name="Kishida Y."/>
            <person name="Kiyokawa C."/>
            <person name="Kohara M."/>
            <person name="Matsumoto M."/>
            <person name="Matsuno A."/>
            <person name="Mochizuki Y."/>
            <person name="Nakayama S."/>
            <person name="Nakazaki N."/>
            <person name="Shimpo S."/>
            <person name="Sugimoto M."/>
            <person name="Takeuchi C."/>
            <person name="Yamada M."/>
            <person name="Tabata S."/>
        </authorList>
    </citation>
    <scope>NUCLEOTIDE SEQUENCE [LARGE SCALE GENOMIC DNA]</scope>
    <source>
        <strain>LMG 29417 / CECT 9101 / MAFF 303099</strain>
    </source>
</reference>
<protein>
    <recommendedName>
        <fullName evidence="1">Putative membrane protein insertion efficiency factor</fullName>
    </recommendedName>
</protein>